<gene>
    <name type="primary">acyP</name>
    <name type="ordered locus">BPP4395</name>
</gene>
<organism>
    <name type="scientific">Bordetella parapertussis (strain 12822 / ATCC BAA-587 / NCTC 13253)</name>
    <dbReference type="NCBI Taxonomy" id="257311"/>
    <lineage>
        <taxon>Bacteria</taxon>
        <taxon>Pseudomonadati</taxon>
        <taxon>Pseudomonadota</taxon>
        <taxon>Betaproteobacteria</taxon>
        <taxon>Burkholderiales</taxon>
        <taxon>Alcaligenaceae</taxon>
        <taxon>Bordetella</taxon>
    </lineage>
</organism>
<evidence type="ECO:0000255" key="1">
    <source>
        <dbReference type="PROSITE-ProRule" id="PRU00520"/>
    </source>
</evidence>
<evidence type="ECO:0000305" key="2"/>
<comment type="catalytic activity">
    <reaction>
        <text>an acyl phosphate + H2O = a carboxylate + phosphate + H(+)</text>
        <dbReference type="Rhea" id="RHEA:14965"/>
        <dbReference type="ChEBI" id="CHEBI:15377"/>
        <dbReference type="ChEBI" id="CHEBI:15378"/>
        <dbReference type="ChEBI" id="CHEBI:29067"/>
        <dbReference type="ChEBI" id="CHEBI:43474"/>
        <dbReference type="ChEBI" id="CHEBI:59918"/>
        <dbReference type="EC" id="3.6.1.7"/>
    </reaction>
</comment>
<comment type="similarity">
    <text evidence="2">Belongs to the acylphosphatase family.</text>
</comment>
<feature type="chain" id="PRO_0000326662" description="Acylphosphatase">
    <location>
        <begin position="1"/>
        <end position="94"/>
    </location>
</feature>
<feature type="domain" description="Acylphosphatase-like" evidence="1">
    <location>
        <begin position="8"/>
        <end position="94"/>
    </location>
</feature>
<feature type="active site" evidence="1">
    <location>
        <position position="23"/>
    </location>
</feature>
<feature type="active site" evidence="1">
    <location>
        <position position="41"/>
    </location>
</feature>
<dbReference type="EC" id="3.6.1.7"/>
<dbReference type="EMBL" id="BX640436">
    <property type="protein sequence ID" value="CAE39674.1"/>
    <property type="molecule type" value="Genomic_DNA"/>
</dbReference>
<dbReference type="RefSeq" id="WP_003816015.1">
    <property type="nucleotide sequence ID" value="NC_002928.3"/>
</dbReference>
<dbReference type="SMR" id="Q7W2L1"/>
<dbReference type="KEGG" id="bpa:BPP4395"/>
<dbReference type="HOGENOM" id="CLU_141932_1_2_4"/>
<dbReference type="Proteomes" id="UP000001421">
    <property type="component" value="Chromosome"/>
</dbReference>
<dbReference type="GO" id="GO:0003998">
    <property type="term" value="F:acylphosphatase activity"/>
    <property type="evidence" value="ECO:0007669"/>
    <property type="project" value="UniProtKB-EC"/>
</dbReference>
<dbReference type="Gene3D" id="3.30.70.100">
    <property type="match status" value="1"/>
</dbReference>
<dbReference type="InterPro" id="IPR020456">
    <property type="entry name" value="Acylphosphatase"/>
</dbReference>
<dbReference type="InterPro" id="IPR001792">
    <property type="entry name" value="Acylphosphatase-like_dom"/>
</dbReference>
<dbReference type="InterPro" id="IPR036046">
    <property type="entry name" value="Acylphosphatase-like_dom_sf"/>
</dbReference>
<dbReference type="InterPro" id="IPR017968">
    <property type="entry name" value="Acylphosphatase_CS"/>
</dbReference>
<dbReference type="NCBIfam" id="NF010998">
    <property type="entry name" value="PRK14424.1"/>
    <property type="match status" value="1"/>
</dbReference>
<dbReference type="PANTHER" id="PTHR47268">
    <property type="entry name" value="ACYLPHOSPHATASE"/>
    <property type="match status" value="1"/>
</dbReference>
<dbReference type="PANTHER" id="PTHR47268:SF4">
    <property type="entry name" value="ACYLPHOSPHATASE"/>
    <property type="match status" value="1"/>
</dbReference>
<dbReference type="Pfam" id="PF00708">
    <property type="entry name" value="Acylphosphatase"/>
    <property type="match status" value="1"/>
</dbReference>
<dbReference type="PRINTS" id="PR00112">
    <property type="entry name" value="ACYLPHPHTASE"/>
</dbReference>
<dbReference type="SUPFAM" id="SSF54975">
    <property type="entry name" value="Acylphosphatase/BLUF domain-like"/>
    <property type="match status" value="1"/>
</dbReference>
<dbReference type="PROSITE" id="PS00151">
    <property type="entry name" value="ACYLPHOSPHATASE_2"/>
    <property type="match status" value="1"/>
</dbReference>
<dbReference type="PROSITE" id="PS51160">
    <property type="entry name" value="ACYLPHOSPHATASE_3"/>
    <property type="match status" value="1"/>
</dbReference>
<sequence length="94" mass="10573">MSDAHMETVHVIVKGKVQGVGYRHAAVRRAHMLGVTGWVQNLPDGTVEAVVQGTADQVDHMLEWLRRGPPAAQVRELASERSFEEKRYKHFAQL</sequence>
<proteinExistence type="inferred from homology"/>
<protein>
    <recommendedName>
        <fullName>Acylphosphatase</fullName>
        <ecNumber>3.6.1.7</ecNumber>
    </recommendedName>
    <alternativeName>
        <fullName>Acylphosphate phosphohydrolase</fullName>
    </alternativeName>
</protein>
<name>ACYP_BORPA</name>
<accession>Q7W2L1</accession>
<reference key="1">
    <citation type="journal article" date="2003" name="Nat. Genet.">
        <title>Comparative analysis of the genome sequences of Bordetella pertussis, Bordetella parapertussis and Bordetella bronchiseptica.</title>
        <authorList>
            <person name="Parkhill J."/>
            <person name="Sebaihia M."/>
            <person name="Preston A."/>
            <person name="Murphy L.D."/>
            <person name="Thomson N.R."/>
            <person name="Harris D.E."/>
            <person name="Holden M.T.G."/>
            <person name="Churcher C.M."/>
            <person name="Bentley S.D."/>
            <person name="Mungall K.L."/>
            <person name="Cerdeno-Tarraga A.-M."/>
            <person name="Temple L."/>
            <person name="James K.D."/>
            <person name="Harris B."/>
            <person name="Quail M.A."/>
            <person name="Achtman M."/>
            <person name="Atkin R."/>
            <person name="Baker S."/>
            <person name="Basham D."/>
            <person name="Bason N."/>
            <person name="Cherevach I."/>
            <person name="Chillingworth T."/>
            <person name="Collins M."/>
            <person name="Cronin A."/>
            <person name="Davis P."/>
            <person name="Doggett J."/>
            <person name="Feltwell T."/>
            <person name="Goble A."/>
            <person name="Hamlin N."/>
            <person name="Hauser H."/>
            <person name="Holroyd S."/>
            <person name="Jagels K."/>
            <person name="Leather S."/>
            <person name="Moule S."/>
            <person name="Norberczak H."/>
            <person name="O'Neil S."/>
            <person name="Ormond D."/>
            <person name="Price C."/>
            <person name="Rabbinowitsch E."/>
            <person name="Rutter S."/>
            <person name="Sanders M."/>
            <person name="Saunders D."/>
            <person name="Seeger K."/>
            <person name="Sharp S."/>
            <person name="Simmonds M."/>
            <person name="Skelton J."/>
            <person name="Squares R."/>
            <person name="Squares S."/>
            <person name="Stevens K."/>
            <person name="Unwin L."/>
            <person name="Whitehead S."/>
            <person name="Barrell B.G."/>
            <person name="Maskell D.J."/>
        </authorList>
    </citation>
    <scope>NUCLEOTIDE SEQUENCE [LARGE SCALE GENOMIC DNA]</scope>
    <source>
        <strain>12822 / ATCC BAA-587 / NCTC 13253</strain>
    </source>
</reference>
<keyword id="KW-0378">Hydrolase</keyword>